<gene>
    <name evidence="2" type="primary">rpsL</name>
    <name type="ordered locus">KPK_0390</name>
</gene>
<keyword id="KW-0488">Methylation</keyword>
<keyword id="KW-0687">Ribonucleoprotein</keyword>
<keyword id="KW-0689">Ribosomal protein</keyword>
<keyword id="KW-0694">RNA-binding</keyword>
<keyword id="KW-0699">rRNA-binding</keyword>
<keyword id="KW-0820">tRNA-binding</keyword>
<dbReference type="EMBL" id="CP000964">
    <property type="protein sequence ID" value="ACI07171.1"/>
    <property type="molecule type" value="Genomic_DNA"/>
</dbReference>
<dbReference type="SMR" id="B5XN85"/>
<dbReference type="KEGG" id="kpe:KPK_0390"/>
<dbReference type="HOGENOM" id="CLU_104295_1_2_6"/>
<dbReference type="Proteomes" id="UP000001734">
    <property type="component" value="Chromosome"/>
</dbReference>
<dbReference type="GO" id="GO:0015935">
    <property type="term" value="C:small ribosomal subunit"/>
    <property type="evidence" value="ECO:0007669"/>
    <property type="project" value="InterPro"/>
</dbReference>
<dbReference type="GO" id="GO:0019843">
    <property type="term" value="F:rRNA binding"/>
    <property type="evidence" value="ECO:0007669"/>
    <property type="project" value="UniProtKB-UniRule"/>
</dbReference>
<dbReference type="GO" id="GO:0003735">
    <property type="term" value="F:structural constituent of ribosome"/>
    <property type="evidence" value="ECO:0007669"/>
    <property type="project" value="InterPro"/>
</dbReference>
<dbReference type="GO" id="GO:0000049">
    <property type="term" value="F:tRNA binding"/>
    <property type="evidence" value="ECO:0007669"/>
    <property type="project" value="UniProtKB-UniRule"/>
</dbReference>
<dbReference type="GO" id="GO:0006412">
    <property type="term" value="P:translation"/>
    <property type="evidence" value="ECO:0007669"/>
    <property type="project" value="UniProtKB-UniRule"/>
</dbReference>
<dbReference type="CDD" id="cd03368">
    <property type="entry name" value="Ribosomal_S12"/>
    <property type="match status" value="1"/>
</dbReference>
<dbReference type="FunFam" id="2.40.50.140:FF:000001">
    <property type="entry name" value="30S ribosomal protein S12"/>
    <property type="match status" value="1"/>
</dbReference>
<dbReference type="Gene3D" id="2.40.50.140">
    <property type="entry name" value="Nucleic acid-binding proteins"/>
    <property type="match status" value="1"/>
</dbReference>
<dbReference type="HAMAP" id="MF_00403_B">
    <property type="entry name" value="Ribosomal_uS12_B"/>
    <property type="match status" value="1"/>
</dbReference>
<dbReference type="InterPro" id="IPR012340">
    <property type="entry name" value="NA-bd_OB-fold"/>
</dbReference>
<dbReference type="InterPro" id="IPR006032">
    <property type="entry name" value="Ribosomal_uS12"/>
</dbReference>
<dbReference type="InterPro" id="IPR005679">
    <property type="entry name" value="Ribosomal_uS12_bac"/>
</dbReference>
<dbReference type="NCBIfam" id="TIGR00981">
    <property type="entry name" value="rpsL_bact"/>
    <property type="match status" value="1"/>
</dbReference>
<dbReference type="PANTHER" id="PTHR11652">
    <property type="entry name" value="30S RIBOSOMAL PROTEIN S12 FAMILY MEMBER"/>
    <property type="match status" value="1"/>
</dbReference>
<dbReference type="Pfam" id="PF00164">
    <property type="entry name" value="Ribosom_S12_S23"/>
    <property type="match status" value="1"/>
</dbReference>
<dbReference type="PIRSF" id="PIRSF002133">
    <property type="entry name" value="Ribosomal_S12/S23"/>
    <property type="match status" value="1"/>
</dbReference>
<dbReference type="PRINTS" id="PR01034">
    <property type="entry name" value="RIBOSOMALS12"/>
</dbReference>
<dbReference type="SUPFAM" id="SSF50249">
    <property type="entry name" value="Nucleic acid-binding proteins"/>
    <property type="match status" value="1"/>
</dbReference>
<dbReference type="PROSITE" id="PS00055">
    <property type="entry name" value="RIBOSOMAL_S12"/>
    <property type="match status" value="1"/>
</dbReference>
<proteinExistence type="inferred from homology"/>
<name>RS12_KLEP3</name>
<organism>
    <name type="scientific">Klebsiella pneumoniae (strain 342)</name>
    <dbReference type="NCBI Taxonomy" id="507522"/>
    <lineage>
        <taxon>Bacteria</taxon>
        <taxon>Pseudomonadati</taxon>
        <taxon>Pseudomonadota</taxon>
        <taxon>Gammaproteobacteria</taxon>
        <taxon>Enterobacterales</taxon>
        <taxon>Enterobacteriaceae</taxon>
        <taxon>Klebsiella/Raoultella group</taxon>
        <taxon>Klebsiella</taxon>
        <taxon>Klebsiella pneumoniae complex</taxon>
    </lineage>
</organism>
<feature type="chain" id="PRO_1000194180" description="Small ribosomal subunit protein uS12">
    <location>
        <begin position="1"/>
        <end position="124"/>
    </location>
</feature>
<feature type="modified residue" description="3-methylthioaspartic acid" evidence="1">
    <location>
        <position position="89"/>
    </location>
</feature>
<accession>B5XN85</accession>
<comment type="function">
    <text evidence="2">With S4 and S5 plays an important role in translational accuracy.</text>
</comment>
<comment type="function">
    <text evidence="2">Interacts with and stabilizes bases of the 16S rRNA that are involved in tRNA selection in the A site and with the mRNA backbone. Located at the interface of the 30S and 50S subunits, it traverses the body of the 30S subunit contacting proteins on the other side and probably holding the rRNA structure together. The combined cluster of proteins S8, S12 and S17 appears to hold together the shoulder and platform of the 30S subunit.</text>
</comment>
<comment type="subunit">
    <text evidence="2">Part of the 30S ribosomal subunit. Contacts proteins S8 and S17. May interact with IF1 in the 30S initiation complex.</text>
</comment>
<comment type="similarity">
    <text evidence="2">Belongs to the universal ribosomal protein uS12 family.</text>
</comment>
<sequence>MATINQLVRKPRARKVAKSNVPALEACPQKRGVCTRVYTTTPKKPNSALRKVCRVRLTNGFEVTSYIGGEGHNLQEHSVILIRGGRVKDLPGVRYHTVRGALDCSGVKDRKQARSKYGVKRPKA</sequence>
<evidence type="ECO:0000250" key="1"/>
<evidence type="ECO:0000255" key="2">
    <source>
        <dbReference type="HAMAP-Rule" id="MF_00403"/>
    </source>
</evidence>
<evidence type="ECO:0000305" key="3"/>
<protein>
    <recommendedName>
        <fullName evidence="2">Small ribosomal subunit protein uS12</fullName>
    </recommendedName>
    <alternativeName>
        <fullName evidence="3">30S ribosomal protein S12</fullName>
    </alternativeName>
</protein>
<reference key="1">
    <citation type="journal article" date="2008" name="PLoS Genet.">
        <title>Complete genome sequence of the N2-fixing broad host range endophyte Klebsiella pneumoniae 342 and virulence predictions verified in mice.</title>
        <authorList>
            <person name="Fouts D.E."/>
            <person name="Tyler H.L."/>
            <person name="DeBoy R.T."/>
            <person name="Daugherty S."/>
            <person name="Ren Q."/>
            <person name="Badger J.H."/>
            <person name="Durkin A.S."/>
            <person name="Huot H."/>
            <person name="Shrivastava S."/>
            <person name="Kothari S."/>
            <person name="Dodson R.J."/>
            <person name="Mohamoud Y."/>
            <person name="Khouri H."/>
            <person name="Roesch L.F.W."/>
            <person name="Krogfelt K.A."/>
            <person name="Struve C."/>
            <person name="Triplett E.W."/>
            <person name="Methe B.A."/>
        </authorList>
    </citation>
    <scope>NUCLEOTIDE SEQUENCE [LARGE SCALE GENOMIC DNA]</scope>
    <source>
        <strain>342</strain>
    </source>
</reference>